<reference key="1">
    <citation type="journal article" date="2001" name="Nature">
        <title>Genome sequence of Yersinia pestis, the causative agent of plague.</title>
        <authorList>
            <person name="Parkhill J."/>
            <person name="Wren B.W."/>
            <person name="Thomson N.R."/>
            <person name="Titball R.W."/>
            <person name="Holden M.T.G."/>
            <person name="Prentice M.B."/>
            <person name="Sebaihia M."/>
            <person name="James K.D."/>
            <person name="Churcher C.M."/>
            <person name="Mungall K.L."/>
            <person name="Baker S."/>
            <person name="Basham D."/>
            <person name="Bentley S.D."/>
            <person name="Brooks K."/>
            <person name="Cerdeno-Tarraga A.-M."/>
            <person name="Chillingworth T."/>
            <person name="Cronin A."/>
            <person name="Davies R.M."/>
            <person name="Davis P."/>
            <person name="Dougan G."/>
            <person name="Feltwell T."/>
            <person name="Hamlin N."/>
            <person name="Holroyd S."/>
            <person name="Jagels K."/>
            <person name="Karlyshev A.V."/>
            <person name="Leather S."/>
            <person name="Moule S."/>
            <person name="Oyston P.C.F."/>
            <person name="Quail M.A."/>
            <person name="Rutherford K.M."/>
            <person name="Simmonds M."/>
            <person name="Skelton J."/>
            <person name="Stevens K."/>
            <person name="Whitehead S."/>
            <person name="Barrell B.G."/>
        </authorList>
    </citation>
    <scope>NUCLEOTIDE SEQUENCE [LARGE SCALE GENOMIC DNA]</scope>
    <source>
        <strain>CO-92 / Biovar Orientalis</strain>
    </source>
</reference>
<reference key="2">
    <citation type="journal article" date="2002" name="J. Bacteriol.">
        <title>Genome sequence of Yersinia pestis KIM.</title>
        <authorList>
            <person name="Deng W."/>
            <person name="Burland V."/>
            <person name="Plunkett G. III"/>
            <person name="Boutin A."/>
            <person name="Mayhew G.F."/>
            <person name="Liss P."/>
            <person name="Perna N.T."/>
            <person name="Rose D.J."/>
            <person name="Mau B."/>
            <person name="Zhou S."/>
            <person name="Schwartz D.C."/>
            <person name="Fetherston J.D."/>
            <person name="Lindler L.E."/>
            <person name="Brubaker R.R."/>
            <person name="Plano G.V."/>
            <person name="Straley S.C."/>
            <person name="McDonough K.A."/>
            <person name="Nilles M.L."/>
            <person name="Matson J.S."/>
            <person name="Blattner F.R."/>
            <person name="Perry R.D."/>
        </authorList>
    </citation>
    <scope>NUCLEOTIDE SEQUENCE [LARGE SCALE GENOMIC DNA]</scope>
    <source>
        <strain>KIM10+ / Biovar Mediaevalis</strain>
    </source>
</reference>
<reference key="3">
    <citation type="journal article" date="2004" name="DNA Res.">
        <title>Complete genome sequence of Yersinia pestis strain 91001, an isolate avirulent to humans.</title>
        <authorList>
            <person name="Song Y."/>
            <person name="Tong Z."/>
            <person name="Wang J."/>
            <person name="Wang L."/>
            <person name="Guo Z."/>
            <person name="Han Y."/>
            <person name="Zhang J."/>
            <person name="Pei D."/>
            <person name="Zhou D."/>
            <person name="Qin H."/>
            <person name="Pang X."/>
            <person name="Han Y."/>
            <person name="Zhai J."/>
            <person name="Li M."/>
            <person name="Cui B."/>
            <person name="Qi Z."/>
            <person name="Jin L."/>
            <person name="Dai R."/>
            <person name="Chen F."/>
            <person name="Li S."/>
            <person name="Ye C."/>
            <person name="Du Z."/>
            <person name="Lin W."/>
            <person name="Wang J."/>
            <person name="Yu J."/>
            <person name="Yang H."/>
            <person name="Wang J."/>
            <person name="Huang P."/>
            <person name="Yang R."/>
        </authorList>
    </citation>
    <scope>NUCLEOTIDE SEQUENCE [LARGE SCALE GENOMIC DNA]</scope>
    <source>
        <strain>91001 / Biovar Mediaevalis</strain>
    </source>
</reference>
<dbReference type="EC" id="6.3.2.4" evidence="2"/>
<dbReference type="EMBL" id="AL590842">
    <property type="protein sequence ID" value="CAL19236.1"/>
    <property type="molecule type" value="Genomic_DNA"/>
</dbReference>
<dbReference type="EMBL" id="AE009952">
    <property type="protein sequence ID" value="AAM87172.1"/>
    <property type="molecule type" value="Genomic_DNA"/>
</dbReference>
<dbReference type="EMBL" id="AE017042">
    <property type="protein sequence ID" value="AAS63775.1"/>
    <property type="molecule type" value="Genomic_DNA"/>
</dbReference>
<dbReference type="PIR" id="AB0069">
    <property type="entry name" value="AB0069"/>
</dbReference>
<dbReference type="RefSeq" id="WP_002210432.1">
    <property type="nucleotide sequence ID" value="NZ_WUCM01000081.1"/>
</dbReference>
<dbReference type="RefSeq" id="YP_002345628.1">
    <property type="nucleotide sequence ID" value="NC_003143.1"/>
</dbReference>
<dbReference type="PDB" id="3V4Z">
    <property type="method" value="X-ray"/>
    <property type="resolution" value="2.69 A"/>
    <property type="chains" value="A/B=1-306"/>
</dbReference>
<dbReference type="PDB" id="4ZQI">
    <property type="method" value="X-ray"/>
    <property type="resolution" value="2.30 A"/>
    <property type="chains" value="A/B/C/D=1-306"/>
</dbReference>
<dbReference type="PDB" id="5BPF">
    <property type="method" value="X-ray"/>
    <property type="resolution" value="2.28 A"/>
    <property type="chains" value="A/B/C/D=1-306"/>
</dbReference>
<dbReference type="PDB" id="5BPH">
    <property type="method" value="X-ray"/>
    <property type="resolution" value="1.70 A"/>
    <property type="chains" value="A/B/C/D=1-306"/>
</dbReference>
<dbReference type="PDB" id="5C1O">
    <property type="method" value="X-ray"/>
    <property type="resolution" value="2.50 A"/>
    <property type="chains" value="A/B/C/D=1-306"/>
</dbReference>
<dbReference type="PDB" id="5C1P">
    <property type="method" value="X-ray"/>
    <property type="resolution" value="2.40 A"/>
    <property type="chains" value="A/B/C/D=1-306"/>
</dbReference>
<dbReference type="PDBsum" id="3V4Z"/>
<dbReference type="PDBsum" id="4ZQI"/>
<dbReference type="PDBsum" id="5BPF"/>
<dbReference type="PDBsum" id="5BPH"/>
<dbReference type="PDBsum" id="5C1O"/>
<dbReference type="PDBsum" id="5C1P"/>
<dbReference type="SMR" id="Q8ZIE7"/>
<dbReference type="IntAct" id="Q8ZIE7">
    <property type="interactions" value="3"/>
</dbReference>
<dbReference type="STRING" id="214092.YPO0557"/>
<dbReference type="PaxDb" id="214092-YPO0557"/>
<dbReference type="DNASU" id="1148571"/>
<dbReference type="EnsemblBacteria" id="AAS63775">
    <property type="protein sequence ID" value="AAS63775"/>
    <property type="gene ID" value="YP_3627"/>
</dbReference>
<dbReference type="KEGG" id="ype:YPO0557"/>
<dbReference type="KEGG" id="ypk:y3624"/>
<dbReference type="KEGG" id="ypm:YP_3627"/>
<dbReference type="PATRIC" id="fig|214092.21.peg.810"/>
<dbReference type="eggNOG" id="COG1181">
    <property type="taxonomic scope" value="Bacteria"/>
</dbReference>
<dbReference type="HOGENOM" id="CLU_039268_1_2_6"/>
<dbReference type="OMA" id="TQYRIPC"/>
<dbReference type="OrthoDB" id="9813261at2"/>
<dbReference type="BRENDA" id="6.3.2.4">
    <property type="organism ID" value="4559"/>
</dbReference>
<dbReference type="UniPathway" id="UPA00219"/>
<dbReference type="EvolutionaryTrace" id="Q8ZIE7"/>
<dbReference type="Proteomes" id="UP000000815">
    <property type="component" value="Chromosome"/>
</dbReference>
<dbReference type="Proteomes" id="UP000001019">
    <property type="component" value="Chromosome"/>
</dbReference>
<dbReference type="Proteomes" id="UP000002490">
    <property type="component" value="Chromosome"/>
</dbReference>
<dbReference type="GO" id="GO:0005829">
    <property type="term" value="C:cytosol"/>
    <property type="evidence" value="ECO:0000318"/>
    <property type="project" value="GO_Central"/>
</dbReference>
<dbReference type="GO" id="GO:0005524">
    <property type="term" value="F:ATP binding"/>
    <property type="evidence" value="ECO:0007669"/>
    <property type="project" value="UniProtKB-KW"/>
</dbReference>
<dbReference type="GO" id="GO:0008716">
    <property type="term" value="F:D-alanine-D-alanine ligase activity"/>
    <property type="evidence" value="ECO:0000318"/>
    <property type="project" value="GO_Central"/>
</dbReference>
<dbReference type="GO" id="GO:0046872">
    <property type="term" value="F:metal ion binding"/>
    <property type="evidence" value="ECO:0007669"/>
    <property type="project" value="UniProtKB-KW"/>
</dbReference>
<dbReference type="GO" id="GO:0071555">
    <property type="term" value="P:cell wall organization"/>
    <property type="evidence" value="ECO:0007669"/>
    <property type="project" value="UniProtKB-KW"/>
</dbReference>
<dbReference type="GO" id="GO:0009252">
    <property type="term" value="P:peptidoglycan biosynthetic process"/>
    <property type="evidence" value="ECO:0000318"/>
    <property type="project" value="GO_Central"/>
</dbReference>
<dbReference type="GO" id="GO:0008360">
    <property type="term" value="P:regulation of cell shape"/>
    <property type="evidence" value="ECO:0007669"/>
    <property type="project" value="UniProtKB-KW"/>
</dbReference>
<dbReference type="FunFam" id="3.30.1490.20:FF:000007">
    <property type="entry name" value="D-alanine--D-alanine ligase"/>
    <property type="match status" value="1"/>
</dbReference>
<dbReference type="FunFam" id="3.30.470.20:FF:000008">
    <property type="entry name" value="D-alanine--D-alanine ligase"/>
    <property type="match status" value="1"/>
</dbReference>
<dbReference type="FunFam" id="3.40.50.20:FF:000013">
    <property type="entry name" value="D-alanine--D-alanine ligase"/>
    <property type="match status" value="1"/>
</dbReference>
<dbReference type="Gene3D" id="3.40.50.20">
    <property type="match status" value="1"/>
</dbReference>
<dbReference type="Gene3D" id="3.30.1490.20">
    <property type="entry name" value="ATP-grasp fold, A domain"/>
    <property type="match status" value="1"/>
</dbReference>
<dbReference type="Gene3D" id="3.30.470.20">
    <property type="entry name" value="ATP-grasp fold, B domain"/>
    <property type="match status" value="1"/>
</dbReference>
<dbReference type="HAMAP" id="MF_00047">
    <property type="entry name" value="Dala_Dala_lig"/>
    <property type="match status" value="1"/>
</dbReference>
<dbReference type="InterPro" id="IPR011761">
    <property type="entry name" value="ATP-grasp"/>
</dbReference>
<dbReference type="InterPro" id="IPR013815">
    <property type="entry name" value="ATP_grasp_subdomain_1"/>
</dbReference>
<dbReference type="InterPro" id="IPR000291">
    <property type="entry name" value="D-Ala_lig_Van_CS"/>
</dbReference>
<dbReference type="InterPro" id="IPR005905">
    <property type="entry name" value="D_ala_D_ala"/>
</dbReference>
<dbReference type="InterPro" id="IPR011095">
    <property type="entry name" value="Dala_Dala_lig_C"/>
</dbReference>
<dbReference type="InterPro" id="IPR011127">
    <property type="entry name" value="Dala_Dala_lig_N"/>
</dbReference>
<dbReference type="InterPro" id="IPR016185">
    <property type="entry name" value="PreATP-grasp_dom_sf"/>
</dbReference>
<dbReference type="NCBIfam" id="TIGR01205">
    <property type="entry name" value="D_ala_D_alaTIGR"/>
    <property type="match status" value="1"/>
</dbReference>
<dbReference type="NCBIfam" id="NF002378">
    <property type="entry name" value="PRK01372.1"/>
    <property type="match status" value="1"/>
</dbReference>
<dbReference type="PANTHER" id="PTHR23132">
    <property type="entry name" value="D-ALANINE--D-ALANINE LIGASE"/>
    <property type="match status" value="1"/>
</dbReference>
<dbReference type="PANTHER" id="PTHR23132:SF23">
    <property type="entry name" value="D-ALANINE--D-ALANINE LIGASE B"/>
    <property type="match status" value="1"/>
</dbReference>
<dbReference type="Pfam" id="PF07478">
    <property type="entry name" value="Dala_Dala_lig_C"/>
    <property type="match status" value="1"/>
</dbReference>
<dbReference type="Pfam" id="PF01820">
    <property type="entry name" value="Dala_Dala_lig_N"/>
    <property type="match status" value="1"/>
</dbReference>
<dbReference type="PIRSF" id="PIRSF039102">
    <property type="entry name" value="Ddl/VanB"/>
    <property type="match status" value="1"/>
</dbReference>
<dbReference type="SUPFAM" id="SSF56059">
    <property type="entry name" value="Glutathione synthetase ATP-binding domain-like"/>
    <property type="match status" value="1"/>
</dbReference>
<dbReference type="SUPFAM" id="SSF52440">
    <property type="entry name" value="PreATP-grasp domain"/>
    <property type="match status" value="1"/>
</dbReference>
<dbReference type="PROSITE" id="PS50975">
    <property type="entry name" value="ATP_GRASP"/>
    <property type="match status" value="1"/>
</dbReference>
<dbReference type="PROSITE" id="PS00843">
    <property type="entry name" value="DALA_DALA_LIGASE_1"/>
    <property type="match status" value="1"/>
</dbReference>
<dbReference type="PROSITE" id="PS00844">
    <property type="entry name" value="DALA_DALA_LIGASE_2"/>
    <property type="match status" value="1"/>
</dbReference>
<proteinExistence type="evidence at protein level"/>
<keyword id="KW-0002">3D-structure</keyword>
<keyword id="KW-0067">ATP-binding</keyword>
<keyword id="KW-0133">Cell shape</keyword>
<keyword id="KW-0961">Cell wall biogenesis/degradation</keyword>
<keyword id="KW-0963">Cytoplasm</keyword>
<keyword id="KW-0436">Ligase</keyword>
<keyword id="KW-0460">Magnesium</keyword>
<keyword id="KW-0464">Manganese</keyword>
<keyword id="KW-0479">Metal-binding</keyword>
<keyword id="KW-0547">Nucleotide-binding</keyword>
<keyword id="KW-0573">Peptidoglycan synthesis</keyword>
<keyword id="KW-1185">Reference proteome</keyword>
<feature type="chain" id="PRO_0000177912" description="D-alanine--D-alanine ligase">
    <location>
        <begin position="1"/>
        <end position="306"/>
    </location>
</feature>
<feature type="domain" description="ATP-grasp" evidence="2">
    <location>
        <begin position="101"/>
        <end position="303"/>
    </location>
</feature>
<feature type="binding site" evidence="2">
    <location>
        <begin position="134"/>
        <end position="189"/>
    </location>
    <ligand>
        <name>ATP</name>
        <dbReference type="ChEBI" id="CHEBI:30616"/>
    </ligand>
</feature>
<feature type="binding site" evidence="2">
    <location>
        <position position="257"/>
    </location>
    <ligand>
        <name>Mg(2+)</name>
        <dbReference type="ChEBI" id="CHEBI:18420"/>
        <label>1</label>
    </ligand>
</feature>
<feature type="binding site" evidence="2">
    <location>
        <position position="270"/>
    </location>
    <ligand>
        <name>Mg(2+)</name>
        <dbReference type="ChEBI" id="CHEBI:18420"/>
        <label>1</label>
    </ligand>
</feature>
<feature type="binding site" evidence="2">
    <location>
        <position position="270"/>
    </location>
    <ligand>
        <name>Mg(2+)</name>
        <dbReference type="ChEBI" id="CHEBI:18420"/>
        <label>2</label>
    </ligand>
</feature>
<feature type="binding site" evidence="2">
    <location>
        <position position="272"/>
    </location>
    <ligand>
        <name>Mg(2+)</name>
        <dbReference type="ChEBI" id="CHEBI:18420"/>
        <label>2</label>
    </ligand>
</feature>
<feature type="strand" evidence="4">
    <location>
        <begin position="4"/>
        <end position="9"/>
    </location>
</feature>
<feature type="helix" evidence="4">
    <location>
        <begin position="16"/>
        <end position="32"/>
    </location>
</feature>
<feature type="strand" evidence="4">
    <location>
        <begin position="36"/>
        <end position="41"/>
    </location>
</feature>
<feature type="turn" evidence="4">
    <location>
        <begin position="42"/>
        <end position="44"/>
    </location>
</feature>
<feature type="helix" evidence="4">
    <location>
        <begin position="47"/>
        <end position="49"/>
    </location>
</feature>
<feature type="turn" evidence="4">
    <location>
        <begin position="50"/>
        <end position="54"/>
    </location>
</feature>
<feature type="strand" evidence="4">
    <location>
        <begin position="57"/>
        <end position="60"/>
    </location>
</feature>
<feature type="turn" evidence="4">
    <location>
        <begin position="65"/>
        <end position="67"/>
    </location>
</feature>
<feature type="strand" evidence="4">
    <location>
        <begin position="68"/>
        <end position="70"/>
    </location>
</feature>
<feature type="helix" evidence="4">
    <location>
        <begin position="71"/>
        <end position="79"/>
    </location>
</feature>
<feature type="strand" evidence="4">
    <location>
        <begin position="83"/>
        <end position="85"/>
    </location>
</feature>
<feature type="helix" evidence="4">
    <location>
        <begin position="88"/>
        <end position="93"/>
    </location>
</feature>
<feature type="helix" evidence="4">
    <location>
        <begin position="97"/>
        <end position="106"/>
    </location>
</feature>
<feature type="strand" evidence="4">
    <location>
        <begin position="114"/>
        <end position="118"/>
    </location>
</feature>
<feature type="helix" evidence="4">
    <location>
        <begin position="119"/>
        <end position="124"/>
    </location>
</feature>
<feature type="helix" evidence="4">
    <location>
        <begin position="127"/>
        <end position="134"/>
    </location>
</feature>
<feature type="helix" evidence="4">
    <location>
        <begin position="135"/>
        <end position="137"/>
    </location>
</feature>
<feature type="strand" evidence="4">
    <location>
        <begin position="139"/>
        <end position="147"/>
    </location>
</feature>
<feature type="turn" evidence="4">
    <location>
        <begin position="150"/>
        <end position="153"/>
    </location>
</feature>
<feature type="strand" evidence="4">
    <location>
        <begin position="155"/>
        <end position="157"/>
    </location>
</feature>
<feature type="helix" evidence="4">
    <location>
        <begin position="160"/>
        <end position="162"/>
    </location>
</feature>
<feature type="helix" evidence="4">
    <location>
        <begin position="163"/>
        <end position="171"/>
    </location>
</feature>
<feature type="strand" evidence="4">
    <location>
        <begin position="175"/>
        <end position="181"/>
    </location>
</feature>
<feature type="strand" evidence="4">
    <location>
        <begin position="187"/>
        <end position="193"/>
    </location>
</feature>
<feature type="strand" evidence="4">
    <location>
        <begin position="201"/>
        <end position="204"/>
    </location>
</feature>
<feature type="strand" evidence="4">
    <location>
        <begin position="206"/>
        <end position="209"/>
    </location>
</feature>
<feature type="helix" evidence="4">
    <location>
        <begin position="212"/>
        <end position="216"/>
    </location>
</feature>
<feature type="strand" evidence="4">
    <location>
        <begin position="222"/>
        <end position="226"/>
    </location>
</feature>
<feature type="helix" evidence="4">
    <location>
        <begin position="231"/>
        <end position="247"/>
    </location>
</feature>
<feature type="strand" evidence="4">
    <location>
        <begin position="252"/>
        <end position="260"/>
    </location>
</feature>
<feature type="strand" evidence="4">
    <location>
        <begin position="266"/>
        <end position="274"/>
    </location>
</feature>
<feature type="strand" evidence="3">
    <location>
        <begin position="278"/>
        <end position="281"/>
    </location>
</feature>
<feature type="helix" evidence="4">
    <location>
        <begin position="282"/>
        <end position="290"/>
    </location>
</feature>
<feature type="helix" evidence="4">
    <location>
        <begin position="294"/>
        <end position="303"/>
    </location>
</feature>
<evidence type="ECO:0000250" key="1"/>
<evidence type="ECO:0000255" key="2">
    <source>
        <dbReference type="HAMAP-Rule" id="MF_00047"/>
    </source>
</evidence>
<evidence type="ECO:0007829" key="3">
    <source>
        <dbReference type="PDB" id="3V4Z"/>
    </source>
</evidence>
<evidence type="ECO:0007829" key="4">
    <source>
        <dbReference type="PDB" id="5BPH"/>
    </source>
</evidence>
<organism>
    <name type="scientific">Yersinia pestis</name>
    <dbReference type="NCBI Taxonomy" id="632"/>
    <lineage>
        <taxon>Bacteria</taxon>
        <taxon>Pseudomonadati</taxon>
        <taxon>Pseudomonadota</taxon>
        <taxon>Gammaproteobacteria</taxon>
        <taxon>Enterobacterales</taxon>
        <taxon>Yersiniaceae</taxon>
        <taxon>Yersinia</taxon>
    </lineage>
</organism>
<accession>Q8ZIE7</accession>
<accession>Q0WJB0</accession>
<gene>
    <name evidence="2" type="primary">ddl</name>
    <name type="synonym">ddlB</name>
    <name type="ordered locus">YPO0557</name>
    <name type="ordered locus">y3624</name>
    <name type="ordered locus">YP_3627</name>
</gene>
<protein>
    <recommendedName>
        <fullName evidence="2">D-alanine--D-alanine ligase</fullName>
        <ecNumber evidence="2">6.3.2.4</ecNumber>
    </recommendedName>
    <alternativeName>
        <fullName evidence="2">D-Ala-D-Ala ligase</fullName>
    </alternativeName>
    <alternativeName>
        <fullName evidence="2">D-alanylalanine synthetase</fullName>
    </alternativeName>
</protein>
<comment type="function">
    <text evidence="2">Cell wall formation.</text>
</comment>
<comment type="catalytic activity">
    <reaction evidence="2">
        <text>2 D-alanine + ATP = D-alanyl-D-alanine + ADP + phosphate + H(+)</text>
        <dbReference type="Rhea" id="RHEA:11224"/>
        <dbReference type="ChEBI" id="CHEBI:15378"/>
        <dbReference type="ChEBI" id="CHEBI:30616"/>
        <dbReference type="ChEBI" id="CHEBI:43474"/>
        <dbReference type="ChEBI" id="CHEBI:57416"/>
        <dbReference type="ChEBI" id="CHEBI:57822"/>
        <dbReference type="ChEBI" id="CHEBI:456216"/>
        <dbReference type="EC" id="6.3.2.4"/>
    </reaction>
</comment>
<comment type="cofactor">
    <cofactor evidence="1">
        <name>Mg(2+)</name>
        <dbReference type="ChEBI" id="CHEBI:18420"/>
    </cofactor>
    <cofactor evidence="1">
        <name>Mn(2+)</name>
        <dbReference type="ChEBI" id="CHEBI:29035"/>
    </cofactor>
    <text evidence="1">Binds 2 magnesium or manganese ions per subunit.</text>
</comment>
<comment type="pathway">
    <text evidence="2">Cell wall biogenesis; peptidoglycan biosynthesis.</text>
</comment>
<comment type="subcellular location">
    <subcellularLocation>
        <location evidence="2">Cytoplasm</location>
    </subcellularLocation>
</comment>
<comment type="similarity">
    <text evidence="2">Belongs to the D-alanine--D-alanine ligase family.</text>
</comment>
<sequence>MAEKVAVLLGGTSAEREVSLLSGQAVLAGLKEAGIDAYGVDTKDFPVTQLKEQGFDKVFIALHGRGGEDGTLQGVLEFLQLPYTGSGVMASALTMDKLRTKLVWQALGLPISPYVALNRQQFETLSPEELVACVAKLGLPLIVKPSHEGSSVGMSKVDHASELQKALVEAFQHDSDVLIEKWLSGPEFTVAILGDEVLPSIRIQPPGVFYDYDAKYLSDKTQYFCPSGLSDESEQQLAALALQAYHALDCSGWGRVDVMQDRDGHFYLLEVNTSPGMTSHSLVPMAARQYGLSFSQLVARILMLAD</sequence>
<name>DDL_YERPE</name>